<name>PURA_HYPNA</name>
<feature type="chain" id="PRO_1000000838" description="Adenylosuccinate synthetase">
    <location>
        <begin position="1"/>
        <end position="430"/>
    </location>
</feature>
<feature type="active site" description="Proton acceptor" evidence="1">
    <location>
        <position position="13"/>
    </location>
</feature>
<feature type="active site" description="Proton donor" evidence="1">
    <location>
        <position position="41"/>
    </location>
</feature>
<feature type="binding site" evidence="1">
    <location>
        <begin position="12"/>
        <end position="18"/>
    </location>
    <ligand>
        <name>GTP</name>
        <dbReference type="ChEBI" id="CHEBI:37565"/>
    </ligand>
</feature>
<feature type="binding site" description="in other chain" evidence="1">
    <location>
        <begin position="13"/>
        <end position="16"/>
    </location>
    <ligand>
        <name>IMP</name>
        <dbReference type="ChEBI" id="CHEBI:58053"/>
        <note>ligand shared between dimeric partners</note>
    </ligand>
</feature>
<feature type="binding site" evidence="1">
    <location>
        <position position="13"/>
    </location>
    <ligand>
        <name>Mg(2+)</name>
        <dbReference type="ChEBI" id="CHEBI:18420"/>
    </ligand>
</feature>
<feature type="binding site" description="in other chain" evidence="1">
    <location>
        <begin position="38"/>
        <end position="41"/>
    </location>
    <ligand>
        <name>IMP</name>
        <dbReference type="ChEBI" id="CHEBI:58053"/>
        <note>ligand shared between dimeric partners</note>
    </ligand>
</feature>
<feature type="binding site" evidence="1">
    <location>
        <begin position="40"/>
        <end position="42"/>
    </location>
    <ligand>
        <name>GTP</name>
        <dbReference type="ChEBI" id="CHEBI:37565"/>
    </ligand>
</feature>
<feature type="binding site" evidence="1">
    <location>
        <position position="40"/>
    </location>
    <ligand>
        <name>Mg(2+)</name>
        <dbReference type="ChEBI" id="CHEBI:18420"/>
    </ligand>
</feature>
<feature type="binding site" description="in other chain" evidence="1">
    <location>
        <position position="130"/>
    </location>
    <ligand>
        <name>IMP</name>
        <dbReference type="ChEBI" id="CHEBI:58053"/>
        <note>ligand shared between dimeric partners</note>
    </ligand>
</feature>
<feature type="binding site" evidence="1">
    <location>
        <position position="144"/>
    </location>
    <ligand>
        <name>IMP</name>
        <dbReference type="ChEBI" id="CHEBI:58053"/>
        <note>ligand shared between dimeric partners</note>
    </ligand>
</feature>
<feature type="binding site" description="in other chain" evidence="1">
    <location>
        <position position="224"/>
    </location>
    <ligand>
        <name>IMP</name>
        <dbReference type="ChEBI" id="CHEBI:58053"/>
        <note>ligand shared between dimeric partners</note>
    </ligand>
</feature>
<feature type="binding site" description="in other chain" evidence="1">
    <location>
        <position position="239"/>
    </location>
    <ligand>
        <name>IMP</name>
        <dbReference type="ChEBI" id="CHEBI:58053"/>
        <note>ligand shared between dimeric partners</note>
    </ligand>
</feature>
<feature type="binding site" evidence="1">
    <location>
        <begin position="299"/>
        <end position="305"/>
    </location>
    <ligand>
        <name>substrate</name>
    </ligand>
</feature>
<feature type="binding site" description="in other chain" evidence="1">
    <location>
        <position position="303"/>
    </location>
    <ligand>
        <name>IMP</name>
        <dbReference type="ChEBI" id="CHEBI:58053"/>
        <note>ligand shared between dimeric partners</note>
    </ligand>
</feature>
<feature type="binding site" evidence="1">
    <location>
        <position position="305"/>
    </location>
    <ligand>
        <name>GTP</name>
        <dbReference type="ChEBI" id="CHEBI:37565"/>
    </ligand>
</feature>
<feature type="binding site" evidence="1">
    <location>
        <begin position="331"/>
        <end position="333"/>
    </location>
    <ligand>
        <name>GTP</name>
        <dbReference type="ChEBI" id="CHEBI:37565"/>
    </ligand>
</feature>
<feature type="binding site" evidence="1">
    <location>
        <begin position="413"/>
        <end position="415"/>
    </location>
    <ligand>
        <name>GTP</name>
        <dbReference type="ChEBI" id="CHEBI:37565"/>
    </ligand>
</feature>
<keyword id="KW-0963">Cytoplasm</keyword>
<keyword id="KW-0342">GTP-binding</keyword>
<keyword id="KW-0436">Ligase</keyword>
<keyword id="KW-0460">Magnesium</keyword>
<keyword id="KW-0479">Metal-binding</keyword>
<keyword id="KW-0547">Nucleotide-binding</keyword>
<keyword id="KW-0658">Purine biosynthesis</keyword>
<keyword id="KW-1185">Reference proteome</keyword>
<reference key="1">
    <citation type="journal article" date="2006" name="J. Bacteriol.">
        <title>Comparative genomic evidence for a close relationship between the dimorphic prosthecate bacteria Hyphomonas neptunium and Caulobacter crescentus.</title>
        <authorList>
            <person name="Badger J.H."/>
            <person name="Hoover T.R."/>
            <person name="Brun Y.V."/>
            <person name="Weiner R.M."/>
            <person name="Laub M.T."/>
            <person name="Alexandre G."/>
            <person name="Mrazek J."/>
            <person name="Ren Q."/>
            <person name="Paulsen I.T."/>
            <person name="Nelson K.E."/>
            <person name="Khouri H.M."/>
            <person name="Radune D."/>
            <person name="Sosa J."/>
            <person name="Dodson R.J."/>
            <person name="Sullivan S.A."/>
            <person name="Rosovitz M.J."/>
            <person name="Madupu R."/>
            <person name="Brinkac L.M."/>
            <person name="Durkin A.S."/>
            <person name="Daugherty S.C."/>
            <person name="Kothari S.P."/>
            <person name="Giglio M.G."/>
            <person name="Zhou L."/>
            <person name="Haft D.H."/>
            <person name="Selengut J.D."/>
            <person name="Davidsen T.M."/>
            <person name="Yang Q."/>
            <person name="Zafar N."/>
            <person name="Ward N.L."/>
        </authorList>
    </citation>
    <scope>NUCLEOTIDE SEQUENCE [LARGE SCALE GENOMIC DNA]</scope>
    <source>
        <strain>ATCC 15444</strain>
    </source>
</reference>
<sequence length="430" mass="45682">MAGVVVVGAQWGDEGKGKIVDWLSSRADVVVRFQGGHNAGHTLVIDGKVFKLALLPSGLVRGGKLSVIGNGVVVDPWHMLTEIEGIQAQGIEVSPESLVLADNASLILPWHKDIDAAREGALGAAQIGTTKRGIGPAYEDRVGRRAIRVADLADPAALDLKIERLLAHHRPLRAGLDLPEPDGAALKAALLEIAPQVLAYAQPVWKLLDEKVRRGSRILFEGAQGVMLDVDHGTYPFVTSSSVVAGNASAGSGVGPGAISYVLGLAKAYTTRVGAGPFPTEQDNDIGKRLGTVGHEFGTNTGRARRCGWFDSVMVRQACATSGVTGLALTKLDVLDGFEEIKICTAYKLNGKTIDYFPAGLTDQAAVEPVYETLKGWSGSTRGARSWTDLPPEAVVYVRRLEELVGKPCALVSTSPEREDVILMRDPFEG</sequence>
<comment type="function">
    <text evidence="1">Plays an important role in the de novo pathway of purine nucleotide biosynthesis. Catalyzes the first committed step in the biosynthesis of AMP from IMP.</text>
</comment>
<comment type="catalytic activity">
    <reaction evidence="1">
        <text>IMP + L-aspartate + GTP = N(6)-(1,2-dicarboxyethyl)-AMP + GDP + phosphate + 2 H(+)</text>
        <dbReference type="Rhea" id="RHEA:15753"/>
        <dbReference type="ChEBI" id="CHEBI:15378"/>
        <dbReference type="ChEBI" id="CHEBI:29991"/>
        <dbReference type="ChEBI" id="CHEBI:37565"/>
        <dbReference type="ChEBI" id="CHEBI:43474"/>
        <dbReference type="ChEBI" id="CHEBI:57567"/>
        <dbReference type="ChEBI" id="CHEBI:58053"/>
        <dbReference type="ChEBI" id="CHEBI:58189"/>
        <dbReference type="EC" id="6.3.4.4"/>
    </reaction>
</comment>
<comment type="cofactor">
    <cofactor evidence="1">
        <name>Mg(2+)</name>
        <dbReference type="ChEBI" id="CHEBI:18420"/>
    </cofactor>
    <text evidence="1">Binds 1 Mg(2+) ion per subunit.</text>
</comment>
<comment type="pathway">
    <text evidence="1">Purine metabolism; AMP biosynthesis via de novo pathway; AMP from IMP: step 1/2.</text>
</comment>
<comment type="subunit">
    <text evidence="1">Homodimer.</text>
</comment>
<comment type="subcellular location">
    <subcellularLocation>
        <location evidence="1">Cytoplasm</location>
    </subcellularLocation>
</comment>
<comment type="similarity">
    <text evidence="1">Belongs to the adenylosuccinate synthetase family.</text>
</comment>
<protein>
    <recommendedName>
        <fullName evidence="1">Adenylosuccinate synthetase</fullName>
        <shortName evidence="1">AMPSase</shortName>
        <shortName evidence="1">AdSS</shortName>
        <ecNumber evidence="1">6.3.4.4</ecNumber>
    </recommendedName>
    <alternativeName>
        <fullName evidence="1">IMP--aspartate ligase</fullName>
    </alternativeName>
</protein>
<gene>
    <name evidence="1" type="primary">purA</name>
    <name type="ordered locus">HNE_3124</name>
</gene>
<evidence type="ECO:0000255" key="1">
    <source>
        <dbReference type="HAMAP-Rule" id="MF_00011"/>
    </source>
</evidence>
<dbReference type="EC" id="6.3.4.4" evidence="1"/>
<dbReference type="EMBL" id="CP000158">
    <property type="protein sequence ID" value="ABI76512.1"/>
    <property type="molecule type" value="Genomic_DNA"/>
</dbReference>
<dbReference type="RefSeq" id="WP_011648096.1">
    <property type="nucleotide sequence ID" value="NC_008358.1"/>
</dbReference>
<dbReference type="SMR" id="Q0BXJ3"/>
<dbReference type="STRING" id="228405.HNE_3124"/>
<dbReference type="KEGG" id="hne:HNE_3124"/>
<dbReference type="eggNOG" id="COG0104">
    <property type="taxonomic scope" value="Bacteria"/>
</dbReference>
<dbReference type="HOGENOM" id="CLU_029848_0_0_5"/>
<dbReference type="UniPathway" id="UPA00075">
    <property type="reaction ID" value="UER00335"/>
</dbReference>
<dbReference type="Proteomes" id="UP000001959">
    <property type="component" value="Chromosome"/>
</dbReference>
<dbReference type="GO" id="GO:0005737">
    <property type="term" value="C:cytoplasm"/>
    <property type="evidence" value="ECO:0007669"/>
    <property type="project" value="UniProtKB-SubCell"/>
</dbReference>
<dbReference type="GO" id="GO:0004019">
    <property type="term" value="F:adenylosuccinate synthase activity"/>
    <property type="evidence" value="ECO:0007669"/>
    <property type="project" value="UniProtKB-UniRule"/>
</dbReference>
<dbReference type="GO" id="GO:0005525">
    <property type="term" value="F:GTP binding"/>
    <property type="evidence" value="ECO:0007669"/>
    <property type="project" value="UniProtKB-UniRule"/>
</dbReference>
<dbReference type="GO" id="GO:0000287">
    <property type="term" value="F:magnesium ion binding"/>
    <property type="evidence" value="ECO:0007669"/>
    <property type="project" value="UniProtKB-UniRule"/>
</dbReference>
<dbReference type="GO" id="GO:0044208">
    <property type="term" value="P:'de novo' AMP biosynthetic process"/>
    <property type="evidence" value="ECO:0007669"/>
    <property type="project" value="UniProtKB-UniRule"/>
</dbReference>
<dbReference type="GO" id="GO:0046040">
    <property type="term" value="P:IMP metabolic process"/>
    <property type="evidence" value="ECO:0007669"/>
    <property type="project" value="TreeGrafter"/>
</dbReference>
<dbReference type="CDD" id="cd03108">
    <property type="entry name" value="AdSS"/>
    <property type="match status" value="1"/>
</dbReference>
<dbReference type="FunFam" id="1.10.300.10:FF:000001">
    <property type="entry name" value="Adenylosuccinate synthetase"/>
    <property type="match status" value="1"/>
</dbReference>
<dbReference type="FunFam" id="3.90.170.10:FF:000001">
    <property type="entry name" value="Adenylosuccinate synthetase"/>
    <property type="match status" value="1"/>
</dbReference>
<dbReference type="Gene3D" id="3.40.440.10">
    <property type="entry name" value="Adenylosuccinate Synthetase, subunit A, domain 1"/>
    <property type="match status" value="1"/>
</dbReference>
<dbReference type="Gene3D" id="1.10.300.10">
    <property type="entry name" value="Adenylosuccinate Synthetase, subunit A, domain 2"/>
    <property type="match status" value="1"/>
</dbReference>
<dbReference type="Gene3D" id="3.90.170.10">
    <property type="entry name" value="Adenylosuccinate Synthetase, subunit A, domain 3"/>
    <property type="match status" value="1"/>
</dbReference>
<dbReference type="HAMAP" id="MF_00011">
    <property type="entry name" value="Adenylosucc_synth"/>
    <property type="match status" value="1"/>
</dbReference>
<dbReference type="InterPro" id="IPR018220">
    <property type="entry name" value="Adenylosuccin_syn_GTP-bd"/>
</dbReference>
<dbReference type="InterPro" id="IPR042109">
    <property type="entry name" value="Adenylosuccinate_synth_dom1"/>
</dbReference>
<dbReference type="InterPro" id="IPR042110">
    <property type="entry name" value="Adenylosuccinate_synth_dom2"/>
</dbReference>
<dbReference type="InterPro" id="IPR042111">
    <property type="entry name" value="Adenylosuccinate_synth_dom3"/>
</dbReference>
<dbReference type="InterPro" id="IPR001114">
    <property type="entry name" value="Adenylosuccinate_synthetase"/>
</dbReference>
<dbReference type="InterPro" id="IPR027417">
    <property type="entry name" value="P-loop_NTPase"/>
</dbReference>
<dbReference type="NCBIfam" id="NF002223">
    <property type="entry name" value="PRK01117.1"/>
    <property type="match status" value="1"/>
</dbReference>
<dbReference type="NCBIfam" id="TIGR00184">
    <property type="entry name" value="purA"/>
    <property type="match status" value="1"/>
</dbReference>
<dbReference type="PANTHER" id="PTHR11846">
    <property type="entry name" value="ADENYLOSUCCINATE SYNTHETASE"/>
    <property type="match status" value="1"/>
</dbReference>
<dbReference type="PANTHER" id="PTHR11846:SF0">
    <property type="entry name" value="ADENYLOSUCCINATE SYNTHETASE"/>
    <property type="match status" value="1"/>
</dbReference>
<dbReference type="Pfam" id="PF00709">
    <property type="entry name" value="Adenylsucc_synt"/>
    <property type="match status" value="1"/>
</dbReference>
<dbReference type="SMART" id="SM00788">
    <property type="entry name" value="Adenylsucc_synt"/>
    <property type="match status" value="1"/>
</dbReference>
<dbReference type="SUPFAM" id="SSF52540">
    <property type="entry name" value="P-loop containing nucleoside triphosphate hydrolases"/>
    <property type="match status" value="1"/>
</dbReference>
<dbReference type="PROSITE" id="PS01266">
    <property type="entry name" value="ADENYLOSUCCIN_SYN_1"/>
    <property type="match status" value="1"/>
</dbReference>
<proteinExistence type="inferred from homology"/>
<organism>
    <name type="scientific">Hyphomonas neptunium (strain ATCC 15444)</name>
    <dbReference type="NCBI Taxonomy" id="228405"/>
    <lineage>
        <taxon>Bacteria</taxon>
        <taxon>Pseudomonadati</taxon>
        <taxon>Pseudomonadota</taxon>
        <taxon>Alphaproteobacteria</taxon>
        <taxon>Hyphomonadales</taxon>
        <taxon>Hyphomonadaceae</taxon>
        <taxon>Hyphomonas</taxon>
    </lineage>
</organism>
<accession>Q0BXJ3</accession>